<proteinExistence type="evidence at transcript level"/>
<accession>P33879</accession>
<protein>
    <recommendedName>
        <fullName>Sodium/potassium-transporting ATPase subunit beta-3</fullName>
    </recommendedName>
    <alternativeName>
        <fullName>Sodium/potassium-dependent ATPase subunit beta-3</fullName>
    </alternativeName>
</protein>
<sequence>MSKETKKPFRQSVAEWRQFVYNPNSGEFLGRTAKSWGLILLFYLVFYGFLAALFTFTMWVMLQTLSNDIPKYRDRISSPGLMISPKPDTALEFYFNKSDAQSYAEYVSTLRKFLETYDDSKQSQNINCTPGKVFDQNDVAVKKACRFNLSELGQCSGKEDKTFGYSKGTPCVLVKMNRIIGLKPEGEPYIQCTSKEPGAVEINYFPSGGLIDLMYFPYYGKTLHAHYLQPLVAVQLAINSNSTNEEIAIECKILGSPNLKNEDDRDKFLGRIAFKVEMTE</sequence>
<reference key="1">
    <citation type="journal article" date="1993" name="Biochim. Biophys. Acta">
        <title>Sequence analysis of DNA encoding an avian Na+,K(+)-ATPase beta 2-subunit.</title>
        <authorList>
            <person name="Lemas M."/>
            <person name="Fambrough D.M."/>
        </authorList>
    </citation>
    <scope>NUCLEOTIDE SEQUENCE [MRNA]</scope>
    <source>
        <strain>White leghorn</strain>
        <tissue>Brain</tissue>
    </source>
</reference>
<comment type="function">
    <text>This is the non-catalytic component of the active enzyme, which catalyzes the hydrolysis of ATP coupled with the exchange of Na(+) and K(+) ions across the plasma membrane. The exact function of the beta-3 subunit is not known.</text>
</comment>
<comment type="subunit">
    <text evidence="4">The sodium/potassium-transporting ATPase is composed of a catalytic alpha subunit, an auxiliary non-catalytic beta subunit and an additional regulatory subunit.</text>
</comment>
<comment type="subcellular location">
    <subcellularLocation>
        <location evidence="2">Cell membrane</location>
        <topology>Single-pass type II membrane protein</topology>
    </subcellularLocation>
</comment>
<comment type="tissue specificity">
    <text>Predominantly expressed in brain.</text>
</comment>
<comment type="similarity">
    <text evidence="4">Belongs to the X(+)/potassium ATPases subunit beta family.</text>
</comment>
<comment type="caution">
    <text evidence="5">Was originally thought to be the beta-2 subunit.</text>
</comment>
<name>AT1B3_CHICK</name>
<feature type="chain" id="PRO_0000219111" description="Sodium/potassium-transporting ATPase subunit beta-3">
    <location>
        <begin position="1"/>
        <end position="280"/>
    </location>
</feature>
<feature type="topological domain" description="Cytoplasmic" evidence="3">
    <location>
        <begin position="1"/>
        <end position="37"/>
    </location>
</feature>
<feature type="transmembrane region" description="Helical; Signal-anchor for type II membrane protein" evidence="3">
    <location>
        <begin position="38"/>
        <end position="62"/>
    </location>
</feature>
<feature type="topological domain" description="Extracellular" evidence="3">
    <location>
        <begin position="63"/>
        <end position="280"/>
    </location>
</feature>
<feature type="glycosylation site" description="N-linked (GlcNAc...) asparagine" evidence="3">
    <location>
        <position position="96"/>
    </location>
</feature>
<feature type="glycosylation site" description="N-linked (GlcNAc...) asparagine" evidence="3">
    <location>
        <position position="148"/>
    </location>
</feature>
<feature type="glycosylation site" description="N-linked (GlcNAc...) asparagine" evidence="3">
    <location>
        <position position="241"/>
    </location>
</feature>
<feature type="disulfide bond" evidence="1">
    <location>
        <begin position="128"/>
        <end position="145"/>
    </location>
</feature>
<feature type="disulfide bond" evidence="1">
    <location>
        <begin position="155"/>
        <end position="171"/>
    </location>
</feature>
<feature type="disulfide bond" evidence="1">
    <location>
        <begin position="192"/>
        <end position="251"/>
    </location>
</feature>
<evidence type="ECO:0000250" key="1"/>
<evidence type="ECO:0000250" key="2">
    <source>
        <dbReference type="UniProtKB" id="P54709"/>
    </source>
</evidence>
<evidence type="ECO:0000255" key="3"/>
<evidence type="ECO:0000305" key="4"/>
<evidence type="ECO:0000305" key="5">
    <source>
    </source>
</evidence>
<gene>
    <name type="primary">ATP1B3</name>
</gene>
<keyword id="KW-1003">Cell membrane</keyword>
<keyword id="KW-1015">Disulfide bond</keyword>
<keyword id="KW-0325">Glycoprotein</keyword>
<keyword id="KW-0406">Ion transport</keyword>
<keyword id="KW-0472">Membrane</keyword>
<keyword id="KW-0630">Potassium</keyword>
<keyword id="KW-0633">Potassium transport</keyword>
<keyword id="KW-1185">Reference proteome</keyword>
<keyword id="KW-0735">Signal-anchor</keyword>
<keyword id="KW-0915">Sodium</keyword>
<keyword id="KW-0739">Sodium transport</keyword>
<keyword id="KW-0740">Sodium/potassium transport</keyword>
<keyword id="KW-0812">Transmembrane</keyword>
<keyword id="KW-1133">Transmembrane helix</keyword>
<keyword id="KW-0813">Transport</keyword>
<organism>
    <name type="scientific">Gallus gallus</name>
    <name type="common">Chicken</name>
    <dbReference type="NCBI Taxonomy" id="9031"/>
    <lineage>
        <taxon>Eukaryota</taxon>
        <taxon>Metazoa</taxon>
        <taxon>Chordata</taxon>
        <taxon>Craniata</taxon>
        <taxon>Vertebrata</taxon>
        <taxon>Euteleostomi</taxon>
        <taxon>Archelosauria</taxon>
        <taxon>Archosauria</taxon>
        <taxon>Dinosauria</taxon>
        <taxon>Saurischia</taxon>
        <taxon>Theropoda</taxon>
        <taxon>Coelurosauria</taxon>
        <taxon>Aves</taxon>
        <taxon>Neognathae</taxon>
        <taxon>Galloanserae</taxon>
        <taxon>Galliformes</taxon>
        <taxon>Phasianidae</taxon>
        <taxon>Phasianinae</taxon>
        <taxon>Gallus</taxon>
    </lineage>
</organism>
<dbReference type="EMBL" id="L13208">
    <property type="protein sequence ID" value="AAA02625.1"/>
    <property type="molecule type" value="mRNA"/>
</dbReference>
<dbReference type="PIR" id="I50396">
    <property type="entry name" value="I50396"/>
</dbReference>
<dbReference type="RefSeq" id="NP_990866.1">
    <property type="nucleotide sequence ID" value="NM_205535.2"/>
</dbReference>
<dbReference type="SMR" id="P33879"/>
<dbReference type="FunCoup" id="P33879">
    <property type="interactions" value="2571"/>
</dbReference>
<dbReference type="STRING" id="9031.ENSGALP00000072479"/>
<dbReference type="GlyCosmos" id="P33879">
    <property type="glycosylation" value="3 sites, No reported glycans"/>
</dbReference>
<dbReference type="GlyGen" id="P33879">
    <property type="glycosylation" value="3 sites"/>
</dbReference>
<dbReference type="PaxDb" id="9031-ENSGALP00000004355"/>
<dbReference type="GeneID" id="396549"/>
<dbReference type="KEGG" id="gga:396549"/>
<dbReference type="CTD" id="483"/>
<dbReference type="VEuPathDB" id="HostDB:geneid_396549"/>
<dbReference type="eggNOG" id="KOG3927">
    <property type="taxonomic scope" value="Eukaryota"/>
</dbReference>
<dbReference type="HOGENOM" id="CLU_057702_1_1_1"/>
<dbReference type="InParanoid" id="P33879"/>
<dbReference type="OMA" id="NRNSGEF"/>
<dbReference type="OrthoDB" id="5912413at2759"/>
<dbReference type="PhylomeDB" id="P33879"/>
<dbReference type="TreeFam" id="TF314618"/>
<dbReference type="Reactome" id="R-GGA-210991">
    <property type="pathway name" value="Basigin interactions"/>
</dbReference>
<dbReference type="Reactome" id="R-GGA-5578775">
    <property type="pathway name" value="Ion homeostasis"/>
</dbReference>
<dbReference type="Reactome" id="R-GGA-936837">
    <property type="pathway name" value="Ion transport by P-type ATPases"/>
</dbReference>
<dbReference type="PRO" id="PR:P33879"/>
<dbReference type="Proteomes" id="UP000000539">
    <property type="component" value="Chromosome 9"/>
</dbReference>
<dbReference type="Bgee" id="ENSGALG00000002764">
    <property type="expression patterns" value="Expressed in cerebellum and 13 other cell types or tissues"/>
</dbReference>
<dbReference type="GO" id="GO:0005890">
    <property type="term" value="C:sodium:potassium-exchanging ATPase complex"/>
    <property type="evidence" value="ECO:0000318"/>
    <property type="project" value="GO_Central"/>
</dbReference>
<dbReference type="GO" id="GO:0001671">
    <property type="term" value="F:ATPase activator activity"/>
    <property type="evidence" value="ECO:0000318"/>
    <property type="project" value="GO_Central"/>
</dbReference>
<dbReference type="GO" id="GO:0030007">
    <property type="term" value="P:intracellular potassium ion homeostasis"/>
    <property type="evidence" value="ECO:0000318"/>
    <property type="project" value="GO_Central"/>
</dbReference>
<dbReference type="GO" id="GO:0006883">
    <property type="term" value="P:intracellular sodium ion homeostasis"/>
    <property type="evidence" value="ECO:0000318"/>
    <property type="project" value="GO_Central"/>
</dbReference>
<dbReference type="GO" id="GO:1990573">
    <property type="term" value="P:potassium ion import across plasma membrane"/>
    <property type="evidence" value="ECO:0000318"/>
    <property type="project" value="GO_Central"/>
</dbReference>
<dbReference type="GO" id="GO:0036376">
    <property type="term" value="P:sodium ion export across plasma membrane"/>
    <property type="evidence" value="ECO:0000318"/>
    <property type="project" value="GO_Central"/>
</dbReference>
<dbReference type="FunFam" id="1.20.5.170:FF:000068">
    <property type="entry name" value="Sodium/potassium-transporting ATPase subunit beta"/>
    <property type="match status" value="1"/>
</dbReference>
<dbReference type="FunFam" id="2.60.40.1660:FF:000005">
    <property type="entry name" value="Sodium/potassium-transporting ATPase subunit beta"/>
    <property type="match status" value="1"/>
</dbReference>
<dbReference type="Gene3D" id="2.60.40.1660">
    <property type="entry name" value="Na, k-atpase alpha subunit"/>
    <property type="match status" value="1"/>
</dbReference>
<dbReference type="InterPro" id="IPR000402">
    <property type="entry name" value="Na/K_ATPase_sub_beta"/>
</dbReference>
<dbReference type="InterPro" id="IPR038702">
    <property type="entry name" value="Na/K_ATPase_sub_beta_sf"/>
</dbReference>
<dbReference type="NCBIfam" id="TIGR01107">
    <property type="entry name" value="Na_K_ATPase_bet"/>
    <property type="match status" value="1"/>
</dbReference>
<dbReference type="PANTHER" id="PTHR11523">
    <property type="entry name" value="SODIUM/POTASSIUM-DEPENDENT ATPASE BETA SUBUNIT"/>
    <property type="match status" value="1"/>
</dbReference>
<dbReference type="PANTHER" id="PTHR11523:SF47">
    <property type="entry name" value="SODIUM_POTASSIUM-TRANSPORTING ATPASE SUBUNIT BETA-3"/>
    <property type="match status" value="1"/>
</dbReference>
<dbReference type="Pfam" id="PF00287">
    <property type="entry name" value="Na_K-ATPase"/>
    <property type="match status" value="1"/>
</dbReference>
<dbReference type="PROSITE" id="PS00390">
    <property type="entry name" value="ATPASE_NA_K_BETA_1"/>
    <property type="match status" value="1"/>
</dbReference>
<dbReference type="PROSITE" id="PS00391">
    <property type="entry name" value="ATPASE_NA_K_BETA_2"/>
    <property type="match status" value="1"/>
</dbReference>